<protein>
    <recommendedName>
        <fullName>Exocyst complex component 7</fullName>
    </recommendedName>
    <alternativeName>
        <fullName>Exocyst complex component Exo70</fullName>
        <shortName>rExo70</shortName>
    </alternativeName>
</protein>
<organism>
    <name type="scientific">Rattus norvegicus</name>
    <name type="common">Rat</name>
    <dbReference type="NCBI Taxonomy" id="10116"/>
    <lineage>
        <taxon>Eukaryota</taxon>
        <taxon>Metazoa</taxon>
        <taxon>Chordata</taxon>
        <taxon>Craniata</taxon>
        <taxon>Vertebrata</taxon>
        <taxon>Euteleostomi</taxon>
        <taxon>Mammalia</taxon>
        <taxon>Eutheria</taxon>
        <taxon>Euarchontoglires</taxon>
        <taxon>Glires</taxon>
        <taxon>Rodentia</taxon>
        <taxon>Myomorpha</taxon>
        <taxon>Muroidea</taxon>
        <taxon>Muridae</taxon>
        <taxon>Murinae</taxon>
        <taxon>Rattus</taxon>
    </lineage>
</organism>
<keyword id="KW-1003">Cell membrane</keyword>
<keyword id="KW-0175">Coiled coil</keyword>
<keyword id="KW-0963">Cytoplasm</keyword>
<keyword id="KW-0268">Exocytosis</keyword>
<keyword id="KW-0472">Membrane</keyword>
<keyword id="KW-0597">Phosphoprotein</keyword>
<keyword id="KW-0653">Protein transport</keyword>
<keyword id="KW-1185">Reference proteome</keyword>
<keyword id="KW-0813">Transport</keyword>
<name>EXOC7_RAT</name>
<reference key="1">
    <citation type="journal article" date="1997" name="Proc. Natl. Acad. Sci. U.S.A.">
        <title>Subunit structure of the mammalian exocyst complex.</title>
        <authorList>
            <person name="Kee Y."/>
            <person name="Yoo J.-S."/>
            <person name="Hazuka C.D."/>
            <person name="Peterson K.E."/>
            <person name="Hsu S.-C."/>
            <person name="Scheller R.H."/>
        </authorList>
    </citation>
    <scope>NUCLEOTIDE SEQUENCE [MRNA]</scope>
    <source>
        <tissue>Brain</tissue>
    </source>
</reference>
<reference key="2">
    <citation type="journal article" date="2012" name="Nat. Commun.">
        <title>Quantitative maps of protein phosphorylation sites across 14 different rat organs and tissues.</title>
        <authorList>
            <person name="Lundby A."/>
            <person name="Secher A."/>
            <person name="Lage K."/>
            <person name="Nordsborg N.B."/>
            <person name="Dmytriyev A."/>
            <person name="Lundby C."/>
            <person name="Olsen J.V."/>
        </authorList>
    </citation>
    <scope>PHOSPHORYLATION [LARGE SCALE ANALYSIS] AT SER-133</scope>
    <scope>IDENTIFICATION BY MASS SPECTROMETRY [LARGE SCALE ANALYSIS]</scope>
</reference>
<comment type="function">
    <text evidence="1 2">Component of the exocyst complex involved in the docking of exocytic vesicles with fusion sites on the plasma membrane. In adipocytes, plays a crucial role in targeting SLC2A4 vesicle to the plasma membrane in response to insulin, perhaps directing the vesicle to the precise site of fusion (By similarity). It is required for neuron survival and plays an essential role in cortical development (By similarity).</text>
</comment>
<comment type="subunit">
    <text evidence="1">The exocyst complex is composed of EXOC1, EXOC2, EXOC3, EXOC4, EXOC5, EXOC6, EXOC7 and EXOC8. Interacts with ARHQ in a GTP-dependent manner. Interacts with RAB11FIP3 (By similarity).</text>
</comment>
<comment type="subcellular location">
    <subcellularLocation>
        <location evidence="3">Cytoplasm</location>
        <location evidence="3">Cytosol</location>
    </subcellularLocation>
    <subcellularLocation>
        <location evidence="3">Cell membrane</location>
        <topology evidence="3">Peripheral membrane protein</topology>
    </subcellularLocation>
    <subcellularLocation>
        <location evidence="4">Midbody</location>
        <location evidence="4">Midbody ring</location>
    </subcellularLocation>
    <text evidence="3 4">Translocates, as a preformed complex with SEC6 and SEC8, to the plasma membrane in response to insulin through the activation of ARHQ (By similarity). Colocalizes with CNTRL/centriolin at the midbody ring (By similarity).</text>
</comment>
<comment type="domain">
    <text evidence="1">The C-terminus is required for translocation to the plasma membrane.</text>
</comment>
<comment type="similarity">
    <text evidence="7">Belongs to the EXO70 family.</text>
</comment>
<feature type="chain" id="PRO_0000118962" description="Exocyst complex component 7">
    <location>
        <begin position="1"/>
        <end position="653"/>
    </location>
</feature>
<feature type="region of interest" description="SEC8 and ARHQ binding" evidence="1">
    <location>
        <begin position="1"/>
        <end position="384"/>
    </location>
</feature>
<feature type="region of interest" description="Disordered" evidence="6">
    <location>
        <begin position="238"/>
        <end position="272"/>
    </location>
</feature>
<feature type="coiled-coil region" evidence="5">
    <location>
        <begin position="5"/>
        <end position="42"/>
    </location>
</feature>
<feature type="coiled-coil region" evidence="5">
    <location>
        <begin position="63"/>
        <end position="85"/>
    </location>
</feature>
<feature type="modified residue" description="Phosphoserine" evidence="8">
    <location>
        <position position="133"/>
    </location>
</feature>
<accession>O54922</accession>
<sequence length="653" mass="75046">MIPPQEASARRREIEDKLKQEEETLSFIRDSLEKSDQLTKNMVSILSSFESRLMKLENSIIPVHKQTENLQRLQENVEKTLSCLDHVISYYHVASDTEKIIREGPTGRLEEYLGSMAKIQKAVEYFQDNSPDSPELNKVKLLFERGKESLESEFRSLMTRHSKVISPVLVLDLISADDELEVQEDVVLEHLPESVLQDVIRISRWLVEYGRNQDFMNVYYQIRSSQLDRSIKGLKEHFRKSSSSSGVPYSPAIPNKRKDTPTKKPIKRPGRDDMLDVETDAYIHCVSAFVRLAQSEYQLLMGIIPEHHQKKTFDSLIQDALDGLMLEGENIVSAARKAIIRHDFSTVLTVFPILRHLKQTKPEFDQVLQGTAASTKNKLPGLITSMETIGAKALEDFADNIKNDPDKEYNMPKDGTVHELTSNAILFLQQLLDFQETAGAMLASQETSSSATSYNSEFSKRLLSTYICKVLGNLQLNLLSKSKVYEDPALSAIFLHNNYNYILKSLEKSELIQLVAVTQKTAERSYREHIEQQIQTYQRSWLKVTDYIAEKNLPVFQPGVKLRDKERQMIKERFKGFNDGLEELCKIQKAWAIPDTEQRDKIRQAQKSIVKETYGAFLHRYSSVPFTKNPEKYIKYRVEQVGDMIDRLFDTSA</sequence>
<proteinExistence type="evidence at protein level"/>
<gene>
    <name type="primary">Exoc7</name>
    <name type="synonym">Exo70</name>
</gene>
<evidence type="ECO:0000250" key="1"/>
<evidence type="ECO:0000250" key="2">
    <source>
        <dbReference type="UniProtKB" id="E7FC72"/>
    </source>
</evidence>
<evidence type="ECO:0000250" key="3">
    <source>
        <dbReference type="UniProtKB" id="O35250"/>
    </source>
</evidence>
<evidence type="ECO:0000250" key="4">
    <source>
        <dbReference type="UniProtKB" id="Q9UPT5"/>
    </source>
</evidence>
<evidence type="ECO:0000255" key="5"/>
<evidence type="ECO:0000256" key="6">
    <source>
        <dbReference type="SAM" id="MobiDB-lite"/>
    </source>
</evidence>
<evidence type="ECO:0000305" key="7"/>
<evidence type="ECO:0007744" key="8">
    <source>
    </source>
</evidence>
<dbReference type="EMBL" id="AF032667">
    <property type="protein sequence ID" value="AAC01579.1"/>
    <property type="molecule type" value="mRNA"/>
</dbReference>
<dbReference type="RefSeq" id="NP_073182.1">
    <property type="nucleotide sequence ID" value="NM_022691.2"/>
</dbReference>
<dbReference type="RefSeq" id="XP_008766651.1">
    <property type="nucleotide sequence ID" value="XM_008768429.2"/>
</dbReference>
<dbReference type="SMR" id="O54922"/>
<dbReference type="BioGRID" id="249170">
    <property type="interactions" value="2"/>
</dbReference>
<dbReference type="CORUM" id="O54922"/>
<dbReference type="FunCoup" id="O54922">
    <property type="interactions" value="3375"/>
</dbReference>
<dbReference type="IntAct" id="O54922">
    <property type="interactions" value="1"/>
</dbReference>
<dbReference type="STRING" id="10116.ENSRNOP00000013281"/>
<dbReference type="GlyGen" id="O54922">
    <property type="glycosylation" value="1 site"/>
</dbReference>
<dbReference type="iPTMnet" id="O54922"/>
<dbReference type="PhosphoSitePlus" id="O54922"/>
<dbReference type="jPOST" id="O54922"/>
<dbReference type="PaxDb" id="10116-ENSRNOP00000013281"/>
<dbReference type="GeneID" id="64632"/>
<dbReference type="KEGG" id="rno:64632"/>
<dbReference type="AGR" id="RGD:620236"/>
<dbReference type="CTD" id="23265"/>
<dbReference type="RGD" id="620236">
    <property type="gene designation" value="Exoc7"/>
</dbReference>
<dbReference type="VEuPathDB" id="HostDB:ENSRNOG00000070201"/>
<dbReference type="eggNOG" id="KOG2344">
    <property type="taxonomic scope" value="Eukaryota"/>
</dbReference>
<dbReference type="HOGENOM" id="CLU_010236_4_0_1"/>
<dbReference type="InParanoid" id="O54922"/>
<dbReference type="OrthoDB" id="33120at9989"/>
<dbReference type="PhylomeDB" id="O54922"/>
<dbReference type="Reactome" id="R-RNO-264876">
    <property type="pathway name" value="Insulin processing"/>
</dbReference>
<dbReference type="Reactome" id="R-RNO-5620916">
    <property type="pathway name" value="VxPx cargo-targeting to cilium"/>
</dbReference>
<dbReference type="PRO" id="PR:O54922"/>
<dbReference type="Proteomes" id="UP000002494">
    <property type="component" value="Chromosome 10"/>
</dbReference>
<dbReference type="Bgee" id="ENSRNOG00000009617">
    <property type="expression patterns" value="Expressed in frontal cortex and 18 other cell types or tissues"/>
</dbReference>
<dbReference type="GO" id="GO:0034451">
    <property type="term" value="C:centriolar satellite"/>
    <property type="evidence" value="ECO:0000266"/>
    <property type="project" value="RGD"/>
</dbReference>
<dbReference type="GO" id="GO:0005829">
    <property type="term" value="C:cytosol"/>
    <property type="evidence" value="ECO:0007669"/>
    <property type="project" value="UniProtKB-SubCell"/>
</dbReference>
<dbReference type="GO" id="GO:0000145">
    <property type="term" value="C:exocyst"/>
    <property type="evidence" value="ECO:0000318"/>
    <property type="project" value="GO_Central"/>
</dbReference>
<dbReference type="GO" id="GO:0090543">
    <property type="term" value="C:Flemming body"/>
    <property type="evidence" value="ECO:0007669"/>
    <property type="project" value="UniProtKB-SubCell"/>
</dbReference>
<dbReference type="GO" id="GO:0032584">
    <property type="term" value="C:growth cone membrane"/>
    <property type="evidence" value="ECO:0000266"/>
    <property type="project" value="RGD"/>
</dbReference>
<dbReference type="GO" id="GO:0005815">
    <property type="term" value="C:microtubule organizing center"/>
    <property type="evidence" value="ECO:0000266"/>
    <property type="project" value="RGD"/>
</dbReference>
<dbReference type="GO" id="GO:0030496">
    <property type="term" value="C:midbody"/>
    <property type="evidence" value="ECO:0000266"/>
    <property type="project" value="RGD"/>
</dbReference>
<dbReference type="GO" id="GO:0098794">
    <property type="term" value="C:postsynapse"/>
    <property type="evidence" value="ECO:0000314"/>
    <property type="project" value="SynGO"/>
</dbReference>
<dbReference type="GO" id="GO:0098793">
    <property type="term" value="C:presynapse"/>
    <property type="evidence" value="ECO:0000314"/>
    <property type="project" value="SynGO"/>
</dbReference>
<dbReference type="GO" id="GO:0005546">
    <property type="term" value="F:phosphatidylinositol-4,5-bisphosphate binding"/>
    <property type="evidence" value="ECO:0007669"/>
    <property type="project" value="InterPro"/>
</dbReference>
<dbReference type="GO" id="GO:0030674">
    <property type="term" value="F:protein-macromolecule adaptor activity"/>
    <property type="evidence" value="ECO:0000266"/>
    <property type="project" value="RGD"/>
</dbReference>
<dbReference type="GO" id="GO:0006887">
    <property type="term" value="P:exocytosis"/>
    <property type="evidence" value="ECO:0000318"/>
    <property type="project" value="GO_Central"/>
</dbReference>
<dbReference type="GO" id="GO:1903438">
    <property type="term" value="P:positive regulation of mitotic cytokinetic process"/>
    <property type="evidence" value="ECO:0000266"/>
    <property type="project" value="RGD"/>
</dbReference>
<dbReference type="GO" id="GO:0071806">
    <property type="term" value="P:protein transmembrane transport"/>
    <property type="evidence" value="ECO:0000266"/>
    <property type="project" value="RGD"/>
</dbReference>
<dbReference type="GO" id="GO:2000535">
    <property type="term" value="P:regulation of entry of bacterium into host cell"/>
    <property type="evidence" value="ECO:0000266"/>
    <property type="project" value="RGD"/>
</dbReference>
<dbReference type="GO" id="GO:0051963">
    <property type="term" value="P:regulation of synapse assembly"/>
    <property type="evidence" value="ECO:0000314"/>
    <property type="project" value="SynGO"/>
</dbReference>
<dbReference type="FunFam" id="1.20.1280.170:FF:000001">
    <property type="entry name" value="Exocyst complex component 7"/>
    <property type="match status" value="1"/>
</dbReference>
<dbReference type="FunFam" id="1.20.1280.170:FF:000002">
    <property type="entry name" value="Exocyst complex component 7"/>
    <property type="match status" value="1"/>
</dbReference>
<dbReference type="Gene3D" id="1.20.1280.170">
    <property type="entry name" value="Exocyst complex component Exo70"/>
    <property type="match status" value="1"/>
</dbReference>
<dbReference type="InterPro" id="IPR016159">
    <property type="entry name" value="Cullin_repeat-like_dom_sf"/>
</dbReference>
<dbReference type="InterPro" id="IPR004140">
    <property type="entry name" value="Exo70"/>
</dbReference>
<dbReference type="InterPro" id="IPR046364">
    <property type="entry name" value="Exo70_C"/>
</dbReference>
<dbReference type="PANTHER" id="PTHR12542:SF41">
    <property type="entry name" value="EXOCYST COMPLEX COMPONENT 7"/>
    <property type="match status" value="1"/>
</dbReference>
<dbReference type="PANTHER" id="PTHR12542">
    <property type="entry name" value="EXOCYST COMPLEX PROTEIN EXO70"/>
    <property type="match status" value="1"/>
</dbReference>
<dbReference type="Pfam" id="PF03081">
    <property type="entry name" value="Exo70_C"/>
    <property type="match status" value="1"/>
</dbReference>
<dbReference type="Pfam" id="PF20669">
    <property type="entry name" value="Exo70_N"/>
    <property type="match status" value="1"/>
</dbReference>
<dbReference type="SUPFAM" id="SSF74788">
    <property type="entry name" value="Cullin repeat-like"/>
    <property type="match status" value="1"/>
</dbReference>